<dbReference type="EC" id="3.4.24.-"/>
<dbReference type="EMBL" id="AE014075">
    <property type="protein sequence ID" value="AAN80727.1"/>
    <property type="molecule type" value="Genomic_DNA"/>
</dbReference>
<dbReference type="RefSeq" id="WP_001184045.1">
    <property type="nucleotide sequence ID" value="NZ_CP051263.1"/>
</dbReference>
<dbReference type="SMR" id="P0AFT0"/>
<dbReference type="STRING" id="199310.c2270"/>
<dbReference type="MEROPS" id="M23.011"/>
<dbReference type="GeneID" id="75202739"/>
<dbReference type="KEGG" id="ecc:c2270"/>
<dbReference type="eggNOG" id="COG0739">
    <property type="taxonomic scope" value="Bacteria"/>
</dbReference>
<dbReference type="HOGENOM" id="CLU_026846_0_2_6"/>
<dbReference type="BioCyc" id="ECOL199310:C2270-MONOMER"/>
<dbReference type="UniPathway" id="UPA00963"/>
<dbReference type="Proteomes" id="UP000001410">
    <property type="component" value="Chromosome"/>
</dbReference>
<dbReference type="GO" id="GO:0005886">
    <property type="term" value="C:plasma membrane"/>
    <property type="evidence" value="ECO:0007669"/>
    <property type="project" value="UniProtKB-SubCell"/>
</dbReference>
<dbReference type="GO" id="GO:0046872">
    <property type="term" value="F:metal ion binding"/>
    <property type="evidence" value="ECO:0007669"/>
    <property type="project" value="UniProtKB-KW"/>
</dbReference>
<dbReference type="GO" id="GO:0004222">
    <property type="term" value="F:metalloendopeptidase activity"/>
    <property type="evidence" value="ECO:0007669"/>
    <property type="project" value="TreeGrafter"/>
</dbReference>
<dbReference type="GO" id="GO:0045227">
    <property type="term" value="P:capsule polysaccharide biosynthetic process"/>
    <property type="evidence" value="ECO:0007669"/>
    <property type="project" value="UniProtKB-UniPathway"/>
</dbReference>
<dbReference type="GO" id="GO:0071555">
    <property type="term" value="P:cell wall organization"/>
    <property type="evidence" value="ECO:0007669"/>
    <property type="project" value="UniProtKB-KW"/>
</dbReference>
<dbReference type="GO" id="GO:0006508">
    <property type="term" value="P:proteolysis"/>
    <property type="evidence" value="ECO:0007669"/>
    <property type="project" value="UniProtKB-KW"/>
</dbReference>
<dbReference type="CDD" id="cd00118">
    <property type="entry name" value="LysM"/>
    <property type="match status" value="1"/>
</dbReference>
<dbReference type="CDD" id="cd12797">
    <property type="entry name" value="M23_peptidase"/>
    <property type="match status" value="1"/>
</dbReference>
<dbReference type="FunFam" id="2.70.70.10:FF:000002">
    <property type="entry name" value="Murein DD-endopeptidase MepM"/>
    <property type="match status" value="1"/>
</dbReference>
<dbReference type="FunFam" id="3.10.450.350:FF:000001">
    <property type="entry name" value="Murein DD-endopeptidase MepM"/>
    <property type="match status" value="1"/>
</dbReference>
<dbReference type="FunFam" id="3.10.450.350:FF:000002">
    <property type="entry name" value="Murein DD-endopeptidase MepM"/>
    <property type="match status" value="1"/>
</dbReference>
<dbReference type="Gene3D" id="3.10.450.350">
    <property type="match status" value="2"/>
</dbReference>
<dbReference type="Gene3D" id="2.70.70.10">
    <property type="entry name" value="Glucose Permease (Domain IIA)"/>
    <property type="match status" value="1"/>
</dbReference>
<dbReference type="InterPro" id="IPR050570">
    <property type="entry name" value="Cell_wall_metabolism_enzyme"/>
</dbReference>
<dbReference type="InterPro" id="IPR045834">
    <property type="entry name" value="Csd3_N2"/>
</dbReference>
<dbReference type="InterPro" id="IPR011055">
    <property type="entry name" value="Dup_hybrid_motif"/>
</dbReference>
<dbReference type="InterPro" id="IPR018392">
    <property type="entry name" value="LysM_dom"/>
</dbReference>
<dbReference type="InterPro" id="IPR036779">
    <property type="entry name" value="LysM_dom_sf"/>
</dbReference>
<dbReference type="InterPro" id="IPR013731">
    <property type="entry name" value="OapA_N"/>
</dbReference>
<dbReference type="InterPro" id="IPR016047">
    <property type="entry name" value="Peptidase_M23"/>
</dbReference>
<dbReference type="NCBIfam" id="NF008652">
    <property type="entry name" value="PRK11649.1"/>
    <property type="match status" value="1"/>
</dbReference>
<dbReference type="PANTHER" id="PTHR21666:SF292">
    <property type="entry name" value="MUREIN DD-ENDOPEPTIDASE MEPM"/>
    <property type="match status" value="1"/>
</dbReference>
<dbReference type="PANTHER" id="PTHR21666">
    <property type="entry name" value="PEPTIDASE-RELATED"/>
    <property type="match status" value="1"/>
</dbReference>
<dbReference type="Pfam" id="PF19425">
    <property type="entry name" value="Csd3_N2"/>
    <property type="match status" value="1"/>
</dbReference>
<dbReference type="Pfam" id="PF01476">
    <property type="entry name" value="LysM"/>
    <property type="match status" value="1"/>
</dbReference>
<dbReference type="Pfam" id="PF08525">
    <property type="entry name" value="OapA_N"/>
    <property type="match status" value="1"/>
</dbReference>
<dbReference type="Pfam" id="PF01551">
    <property type="entry name" value="Peptidase_M23"/>
    <property type="match status" value="1"/>
</dbReference>
<dbReference type="SMART" id="SM00257">
    <property type="entry name" value="LysM"/>
    <property type="match status" value="1"/>
</dbReference>
<dbReference type="SUPFAM" id="SSF51261">
    <property type="entry name" value="Duplicated hybrid motif"/>
    <property type="match status" value="1"/>
</dbReference>
<dbReference type="SUPFAM" id="SSF54106">
    <property type="entry name" value="LysM domain"/>
    <property type="match status" value="1"/>
</dbReference>
<dbReference type="PROSITE" id="PS51782">
    <property type="entry name" value="LYSM"/>
    <property type="match status" value="1"/>
</dbReference>
<comment type="function">
    <text evidence="1">A murein DD-endopeptidase with specificity for D-Ala-meso-diaminopimelic acid (mDAP) cross-links. Its role is probably to cleave D-Ala-mDAP cross-links to allow insertion of new glycans and thus cell wall expansion. Functionally redundant with MepM and MepH (By similarity).</text>
</comment>
<comment type="cofactor">
    <cofactor evidence="1">
        <name>Zn(2+)</name>
        <dbReference type="ChEBI" id="CHEBI:29105"/>
    </cofactor>
</comment>
<comment type="pathway">
    <text>Cell wall biogenesis; cell wall polysaccharide biosynthesis.</text>
</comment>
<comment type="subcellular location">
    <subcellularLocation>
        <location evidence="4">Cell membrane</location>
        <topology evidence="4">Single-pass membrane protein</topology>
    </subcellularLocation>
</comment>
<comment type="similarity">
    <text evidence="4">Belongs to the peptidase M23B family.</text>
</comment>
<accession>P0AFT0</accession>
<accession>O07981</accession>
<accession>P24204</accession>
<accession>P76283</accession>
<feature type="chain" id="PRO_0000045124" description="Murein DD-endopeptidase MepM">
    <location>
        <begin position="1"/>
        <end position="440"/>
    </location>
</feature>
<feature type="transmembrane region" description="Helical" evidence="2">
    <location>
        <begin position="21"/>
        <end position="40"/>
    </location>
</feature>
<feature type="domain" description="LysM" evidence="3">
    <location>
        <begin position="96"/>
        <end position="141"/>
    </location>
</feature>
<feature type="binding site" evidence="2">
    <location>
        <position position="314"/>
    </location>
    <ligand>
        <name>Zn(2+)</name>
        <dbReference type="ChEBI" id="CHEBI:29105"/>
    </ligand>
</feature>
<keyword id="KW-1003">Cell membrane</keyword>
<keyword id="KW-0961">Cell wall biogenesis/degradation</keyword>
<keyword id="KW-0378">Hydrolase</keyword>
<keyword id="KW-0472">Membrane</keyword>
<keyword id="KW-0479">Metal-binding</keyword>
<keyword id="KW-0482">Metalloprotease</keyword>
<keyword id="KW-0645">Protease</keyword>
<keyword id="KW-1185">Reference proteome</keyword>
<keyword id="KW-0812">Transmembrane</keyword>
<keyword id="KW-1133">Transmembrane helix</keyword>
<keyword id="KW-0862">Zinc</keyword>
<gene>
    <name type="primary">mepM</name>
    <name type="synonym">yebA</name>
    <name type="ordered locus">c2270</name>
</gene>
<name>MEPM_ECOL6</name>
<reference key="1">
    <citation type="journal article" date="2002" name="Proc. Natl. Acad. Sci. U.S.A.">
        <title>Extensive mosaic structure revealed by the complete genome sequence of uropathogenic Escherichia coli.</title>
        <authorList>
            <person name="Welch R.A."/>
            <person name="Burland V."/>
            <person name="Plunkett G. III"/>
            <person name="Redford P."/>
            <person name="Roesch P."/>
            <person name="Rasko D."/>
            <person name="Buckles E.L."/>
            <person name="Liou S.-R."/>
            <person name="Boutin A."/>
            <person name="Hackett J."/>
            <person name="Stroud D."/>
            <person name="Mayhew G.F."/>
            <person name="Rose D.J."/>
            <person name="Zhou S."/>
            <person name="Schwartz D.C."/>
            <person name="Perna N.T."/>
            <person name="Mobley H.L.T."/>
            <person name="Donnenberg M.S."/>
            <person name="Blattner F.R."/>
        </authorList>
    </citation>
    <scope>NUCLEOTIDE SEQUENCE [LARGE SCALE GENOMIC DNA]</scope>
    <source>
        <strain>CFT073 / ATCC 700928 / UPEC</strain>
    </source>
</reference>
<organism>
    <name type="scientific">Escherichia coli O6:H1 (strain CFT073 / ATCC 700928 / UPEC)</name>
    <dbReference type="NCBI Taxonomy" id="199310"/>
    <lineage>
        <taxon>Bacteria</taxon>
        <taxon>Pseudomonadati</taxon>
        <taxon>Pseudomonadota</taxon>
        <taxon>Gammaproteobacteria</taxon>
        <taxon>Enterobacterales</taxon>
        <taxon>Enterobacteriaceae</taxon>
        <taxon>Escherichia</taxon>
    </lineage>
</organism>
<protein>
    <recommendedName>
        <fullName>Murein DD-endopeptidase MepM</fullName>
        <ecNumber>3.4.24.-</ecNumber>
    </recommendedName>
    <alternativeName>
        <fullName>Murein hydrolase MepM</fullName>
    </alternativeName>
</protein>
<evidence type="ECO:0000250" key="1"/>
<evidence type="ECO:0000255" key="2"/>
<evidence type="ECO:0000255" key="3">
    <source>
        <dbReference type="PROSITE-ProRule" id="PRU01118"/>
    </source>
</evidence>
<evidence type="ECO:0000305" key="4"/>
<proteinExistence type="inferred from homology"/>
<sequence length="440" mass="49058">MQQIARSVALAFNNLPRPHRVMLGSLTVLTLAVAVWRPYVYHRDATPIVKTIELEQNEIRSLLPEASEPIDQAAQEDEAIPQDELDDKIAGEAGVHEYVVSTGDTLSSILNQYGIDMGDITQLAAADKELRNLKIGQQLSWTLTADGELQRLTWEVSRRETRTYDRTAANGFKMTSEMQQGEWVNNLLKGTVGGSFVASARNAGLTSAEVSAVIKAMQWQMDFRKLKKGDEFAVLMSREMLDGKREQSQLLGVRLRSEGKDYYAIRAEDGKFYDRNGTGLAKGFLRFPTAKQFRISSNFNPRRTNPVTGRVAPHRGVDFAMPQGTPVLSVGDGEVVVAKRSGAAGYYVAIRHGRSYTTRYMHLRKILVKPGQKVKRGDRIALSGNTGRSTGPHLHYEVWINQQAVNPLTAKLPRTEGLTGSDRREFLAQAKEIVPQLRFD</sequence>